<organism>
    <name type="scientific">Methanococcus maripaludis (strain C6 / ATCC BAA-1332)</name>
    <dbReference type="NCBI Taxonomy" id="444158"/>
    <lineage>
        <taxon>Archaea</taxon>
        <taxon>Methanobacteriati</taxon>
        <taxon>Methanobacteriota</taxon>
        <taxon>Methanomada group</taxon>
        <taxon>Methanococci</taxon>
        <taxon>Methanococcales</taxon>
        <taxon>Methanococcaceae</taxon>
        <taxon>Methanococcus</taxon>
    </lineage>
</organism>
<accession>A9A9P4</accession>
<feature type="chain" id="PRO_1000140867" description="Small ribosomal subunit protein uS5">
    <location>
        <begin position="1"/>
        <end position="229"/>
    </location>
</feature>
<feature type="domain" description="S5 DRBM" evidence="1">
    <location>
        <begin position="61"/>
        <end position="124"/>
    </location>
</feature>
<proteinExistence type="inferred from homology"/>
<reference key="1">
    <citation type="submission" date="2007-10" db="EMBL/GenBank/DDBJ databases">
        <title>Complete sequence of Methanococcus maripaludis C6.</title>
        <authorList>
            <consortium name="US DOE Joint Genome Institute"/>
            <person name="Copeland A."/>
            <person name="Lucas S."/>
            <person name="Lapidus A."/>
            <person name="Barry K."/>
            <person name="Glavina del Rio T."/>
            <person name="Dalin E."/>
            <person name="Tice H."/>
            <person name="Pitluck S."/>
            <person name="Clum A."/>
            <person name="Schmutz J."/>
            <person name="Larimer F."/>
            <person name="Land M."/>
            <person name="Hauser L."/>
            <person name="Kyrpides N."/>
            <person name="Mikhailova N."/>
            <person name="Sieprawska-Lupa M."/>
            <person name="Whitman W.B."/>
            <person name="Richardson P."/>
        </authorList>
    </citation>
    <scope>NUCLEOTIDE SEQUENCE [LARGE SCALE GENOMIC DNA]</scope>
    <source>
        <strain>C6 / ATCC BAA-1332</strain>
    </source>
</reference>
<comment type="function">
    <text evidence="1">With S4 and S12 plays an important role in translational accuracy.</text>
</comment>
<comment type="subunit">
    <text evidence="1">Part of the 30S ribosomal subunit. Contacts protein S4.</text>
</comment>
<comment type="domain">
    <text>The N-terminal domain interacts with the head of the 30S subunit; the C-terminal domain interacts with the body and contacts protein S4. The interaction surface between S4 and S5 is involved in control of translational fidelity.</text>
</comment>
<comment type="similarity">
    <text evidence="1">Belongs to the universal ribosomal protein uS5 family.</text>
</comment>
<sequence>MAEKKAEKRAEKRKFNTEAWEPKTQIGRMVKEGTISDINYIMDKGLPLLEPEIVDALLPDLEEQVLDVKLVQRMHKSGRRARYRATVVVGNKNGYVGVGMGKSKEVGPAIRKAIAHAKLSLIKVRVGCGSWECGCGSPHSIPFTAKGACGSVKVELLPAPRGVGLVAGNVAKAVLGLAGIKDAWTKTFGDTRTTYNFAEATFDALNNLNFVRCLPAQKEKLGLTEGRVL</sequence>
<dbReference type="EMBL" id="CP000867">
    <property type="protein sequence ID" value="ABX02067.1"/>
    <property type="molecule type" value="Genomic_DNA"/>
</dbReference>
<dbReference type="SMR" id="A9A9P4"/>
<dbReference type="STRING" id="444158.MmarC6_1254"/>
<dbReference type="KEGG" id="mmx:MmarC6_1254"/>
<dbReference type="eggNOG" id="arCOG04087">
    <property type="taxonomic scope" value="Archaea"/>
</dbReference>
<dbReference type="HOGENOM" id="CLU_065898_0_1_2"/>
<dbReference type="OrthoDB" id="38155at2157"/>
<dbReference type="PhylomeDB" id="A9A9P4"/>
<dbReference type="GO" id="GO:0022627">
    <property type="term" value="C:cytosolic small ribosomal subunit"/>
    <property type="evidence" value="ECO:0007669"/>
    <property type="project" value="TreeGrafter"/>
</dbReference>
<dbReference type="GO" id="GO:0019843">
    <property type="term" value="F:rRNA binding"/>
    <property type="evidence" value="ECO:0007669"/>
    <property type="project" value="UniProtKB-UniRule"/>
</dbReference>
<dbReference type="GO" id="GO:0003735">
    <property type="term" value="F:structural constituent of ribosome"/>
    <property type="evidence" value="ECO:0007669"/>
    <property type="project" value="InterPro"/>
</dbReference>
<dbReference type="GO" id="GO:0006412">
    <property type="term" value="P:translation"/>
    <property type="evidence" value="ECO:0007669"/>
    <property type="project" value="UniProtKB-UniRule"/>
</dbReference>
<dbReference type="FunFam" id="3.30.160.20:FF:000002">
    <property type="entry name" value="40S ribosomal protein S2"/>
    <property type="match status" value="1"/>
</dbReference>
<dbReference type="FunFam" id="3.30.230.10:FF:000004">
    <property type="entry name" value="40S ribosomal protein S2"/>
    <property type="match status" value="1"/>
</dbReference>
<dbReference type="Gene3D" id="3.30.160.20">
    <property type="match status" value="1"/>
</dbReference>
<dbReference type="Gene3D" id="3.30.230.10">
    <property type="match status" value="1"/>
</dbReference>
<dbReference type="HAMAP" id="MF_01307_A">
    <property type="entry name" value="Ribosomal_uS5_A"/>
    <property type="match status" value="1"/>
</dbReference>
<dbReference type="InterPro" id="IPR020568">
    <property type="entry name" value="Ribosomal_Su5_D2-typ_SF"/>
</dbReference>
<dbReference type="InterPro" id="IPR000851">
    <property type="entry name" value="Ribosomal_uS5"/>
</dbReference>
<dbReference type="InterPro" id="IPR047866">
    <property type="entry name" value="Ribosomal_uS5_arc"/>
</dbReference>
<dbReference type="InterPro" id="IPR005324">
    <property type="entry name" value="Ribosomal_uS5_C"/>
</dbReference>
<dbReference type="InterPro" id="IPR005711">
    <property type="entry name" value="Ribosomal_uS5_euk/arc"/>
</dbReference>
<dbReference type="InterPro" id="IPR013810">
    <property type="entry name" value="Ribosomal_uS5_N"/>
</dbReference>
<dbReference type="InterPro" id="IPR018192">
    <property type="entry name" value="Ribosomal_uS5_N_CS"/>
</dbReference>
<dbReference type="InterPro" id="IPR014721">
    <property type="entry name" value="Ribsml_uS5_D2-typ_fold_subgr"/>
</dbReference>
<dbReference type="NCBIfam" id="NF003125">
    <property type="entry name" value="PRK04044.1"/>
    <property type="match status" value="1"/>
</dbReference>
<dbReference type="NCBIfam" id="TIGR01020">
    <property type="entry name" value="uS5_euk_arch"/>
    <property type="match status" value="1"/>
</dbReference>
<dbReference type="PANTHER" id="PTHR13718:SF4">
    <property type="entry name" value="40S RIBOSOMAL PROTEIN S2"/>
    <property type="match status" value="1"/>
</dbReference>
<dbReference type="PANTHER" id="PTHR13718">
    <property type="entry name" value="RIBOSOMAL S SUBUNIT"/>
    <property type="match status" value="1"/>
</dbReference>
<dbReference type="Pfam" id="PF00333">
    <property type="entry name" value="Ribosomal_S5"/>
    <property type="match status" value="1"/>
</dbReference>
<dbReference type="Pfam" id="PF03719">
    <property type="entry name" value="Ribosomal_S5_C"/>
    <property type="match status" value="1"/>
</dbReference>
<dbReference type="SUPFAM" id="SSF54768">
    <property type="entry name" value="dsRNA-binding domain-like"/>
    <property type="match status" value="1"/>
</dbReference>
<dbReference type="SUPFAM" id="SSF54211">
    <property type="entry name" value="Ribosomal protein S5 domain 2-like"/>
    <property type="match status" value="1"/>
</dbReference>
<dbReference type="PROSITE" id="PS00585">
    <property type="entry name" value="RIBOSOMAL_S5"/>
    <property type="match status" value="1"/>
</dbReference>
<dbReference type="PROSITE" id="PS50881">
    <property type="entry name" value="S5_DSRBD"/>
    <property type="match status" value="1"/>
</dbReference>
<protein>
    <recommendedName>
        <fullName evidence="1">Small ribosomal subunit protein uS5</fullName>
    </recommendedName>
    <alternativeName>
        <fullName evidence="2">30S ribosomal protein S5</fullName>
    </alternativeName>
</protein>
<evidence type="ECO:0000255" key="1">
    <source>
        <dbReference type="HAMAP-Rule" id="MF_01307"/>
    </source>
</evidence>
<evidence type="ECO:0000305" key="2"/>
<keyword id="KW-0687">Ribonucleoprotein</keyword>
<keyword id="KW-0689">Ribosomal protein</keyword>
<keyword id="KW-0694">RNA-binding</keyword>
<keyword id="KW-0699">rRNA-binding</keyword>
<gene>
    <name evidence="1" type="primary">rps5</name>
    <name type="ordered locus">MmarC6_1254</name>
</gene>
<name>RS5_METM6</name>